<sequence>MATRTQFENSNEVGVFSNLTNSYCLVAVGGSENFYSAFEAELGDVIPIVHTTIAGTRIVGRMTSGNRRGLLVPTQTTDQELMHLRNSLPDSIKIQRVEERLSALGNVICCNDYVALVHPDIERETEELIADVLGVEVFRQTIAGNVLVGSYCSLSNQGGLVHPQTSIQDQEELSSLLQVPLVAGTVNRGSSVVGAGMVVNDWLSVAGLDTTAPELSVIESIFRLQDAQPDAIGGNLRDTLIETYS</sequence>
<proteinExistence type="inferred from homology"/>
<comment type="function">
    <text evidence="1">Binds to the 60S ribosomal subunit and prevents its association with the 40S ribosomal subunit to form the 80S initiation complex in the cytoplasm. Is also involved in ribosome biogenesis. Associates with pre-60S subunits in the nucleus and is involved in its nuclear export.</text>
</comment>
<comment type="subunit">
    <text evidence="1">Monomer. Associates with the 60S ribosomal subunit.</text>
</comment>
<comment type="subcellular location">
    <subcellularLocation>
        <location evidence="1">Cytoplasm</location>
    </subcellularLocation>
    <subcellularLocation>
        <location evidence="1">Nucleus</location>
        <location evidence="1">Nucleolus</location>
    </subcellularLocation>
    <text evidence="1">Shuttles between cytoplasm and nucleus/nucleolus.</text>
</comment>
<comment type="PTM">
    <text evidence="1">Phosphorylation at Ser-174 and Ser-175 promotes nuclear export.</text>
</comment>
<comment type="similarity">
    <text evidence="1">Belongs to the eIF-6 family.</text>
</comment>
<dbReference type="EMBL" id="CP017630">
    <property type="protein sequence ID" value="AOW31403.1"/>
    <property type="molecule type" value="Genomic_DNA"/>
</dbReference>
<dbReference type="RefSeq" id="XP_710434.1">
    <property type="nucleotide sequence ID" value="XM_705342.2"/>
</dbReference>
<dbReference type="SMR" id="Q59L13"/>
<dbReference type="FunCoup" id="Q59L13">
    <property type="interactions" value="1165"/>
</dbReference>
<dbReference type="STRING" id="237561.Q59L13"/>
<dbReference type="EnsemblFungi" id="CR_07080W_A-T">
    <property type="protein sequence ID" value="CR_07080W_A-T-p1"/>
    <property type="gene ID" value="CR_07080W_A"/>
</dbReference>
<dbReference type="GeneID" id="3647964"/>
<dbReference type="KEGG" id="cal:CAALFM_CR07080WA"/>
<dbReference type="CGD" id="CAL0000186684">
    <property type="gene designation" value="orf19.9378"/>
</dbReference>
<dbReference type="VEuPathDB" id="FungiDB:CR_07080W_A"/>
<dbReference type="eggNOG" id="KOG3185">
    <property type="taxonomic scope" value="Eukaryota"/>
</dbReference>
<dbReference type="HOGENOM" id="CLU_071894_0_0_1"/>
<dbReference type="InParanoid" id="Q59L13"/>
<dbReference type="OMA" id="WCAFCGM"/>
<dbReference type="OrthoDB" id="4155914at2759"/>
<dbReference type="PRO" id="PR:Q59L13"/>
<dbReference type="Proteomes" id="UP000000559">
    <property type="component" value="Chromosome R"/>
</dbReference>
<dbReference type="GO" id="GO:0005829">
    <property type="term" value="C:cytosol"/>
    <property type="evidence" value="ECO:0000318"/>
    <property type="project" value="GO_Central"/>
</dbReference>
<dbReference type="GO" id="GO:0005730">
    <property type="term" value="C:nucleolus"/>
    <property type="evidence" value="ECO:0007669"/>
    <property type="project" value="UniProtKB-SubCell"/>
</dbReference>
<dbReference type="GO" id="GO:0005634">
    <property type="term" value="C:nucleus"/>
    <property type="evidence" value="ECO:0000318"/>
    <property type="project" value="GO_Central"/>
</dbReference>
<dbReference type="GO" id="GO:0030687">
    <property type="term" value="C:preribosome, large subunit precursor"/>
    <property type="evidence" value="ECO:0007669"/>
    <property type="project" value="EnsemblFungi"/>
</dbReference>
<dbReference type="GO" id="GO:0043023">
    <property type="term" value="F:ribosomal large subunit binding"/>
    <property type="evidence" value="ECO:0000318"/>
    <property type="project" value="GO_Central"/>
</dbReference>
<dbReference type="GO" id="GO:0003743">
    <property type="term" value="F:translation initiation factor activity"/>
    <property type="evidence" value="ECO:0007669"/>
    <property type="project" value="UniProtKB-UniRule"/>
</dbReference>
<dbReference type="GO" id="GO:1902626">
    <property type="term" value="P:assembly of large subunit precursor of preribosome"/>
    <property type="evidence" value="ECO:0000318"/>
    <property type="project" value="GO_Central"/>
</dbReference>
<dbReference type="GO" id="GO:0042256">
    <property type="term" value="P:cytosolic ribosome assembly"/>
    <property type="evidence" value="ECO:0007669"/>
    <property type="project" value="UniProtKB-UniRule"/>
</dbReference>
<dbReference type="GO" id="GO:0000460">
    <property type="term" value="P:maturation of 5.8S rRNA"/>
    <property type="evidence" value="ECO:0000318"/>
    <property type="project" value="GO_Central"/>
</dbReference>
<dbReference type="GO" id="GO:0000466">
    <property type="term" value="P:maturation of 5.8S rRNA from tricistronic rRNA transcript (SSU-rRNA, 5.8S rRNA, LSU-rRNA)"/>
    <property type="evidence" value="ECO:0007669"/>
    <property type="project" value="EnsemblFungi"/>
</dbReference>
<dbReference type="GO" id="GO:0000470">
    <property type="term" value="P:maturation of LSU-rRNA"/>
    <property type="evidence" value="ECO:0000318"/>
    <property type="project" value="GO_Central"/>
</dbReference>
<dbReference type="GO" id="GO:0000463">
    <property type="term" value="P:maturation of LSU-rRNA from tricistronic rRNA transcript (SSU-rRNA, 5.8S rRNA, LSU-rRNA)"/>
    <property type="evidence" value="ECO:0007669"/>
    <property type="project" value="EnsemblFungi"/>
</dbReference>
<dbReference type="GO" id="GO:0000054">
    <property type="term" value="P:ribosomal subunit export from nucleus"/>
    <property type="evidence" value="ECO:0000318"/>
    <property type="project" value="GO_Central"/>
</dbReference>
<dbReference type="CDD" id="cd00527">
    <property type="entry name" value="IF6"/>
    <property type="match status" value="1"/>
</dbReference>
<dbReference type="FunFam" id="3.75.10.10:FF:000001">
    <property type="entry name" value="Eukaryotic translation initiation factor 6"/>
    <property type="match status" value="1"/>
</dbReference>
<dbReference type="Gene3D" id="3.75.10.10">
    <property type="entry name" value="L-arginine/glycine Amidinotransferase, Chain A"/>
    <property type="match status" value="1"/>
</dbReference>
<dbReference type="HAMAP" id="MF_00032">
    <property type="entry name" value="eIF_6"/>
    <property type="match status" value="1"/>
</dbReference>
<dbReference type="InterPro" id="IPR002769">
    <property type="entry name" value="eIF6"/>
</dbReference>
<dbReference type="NCBIfam" id="TIGR00323">
    <property type="entry name" value="eIF-6"/>
    <property type="match status" value="1"/>
</dbReference>
<dbReference type="PANTHER" id="PTHR10784">
    <property type="entry name" value="TRANSLATION INITIATION FACTOR 6"/>
    <property type="match status" value="1"/>
</dbReference>
<dbReference type="Pfam" id="PF01912">
    <property type="entry name" value="eIF-6"/>
    <property type="match status" value="1"/>
</dbReference>
<dbReference type="PIRSF" id="PIRSF006413">
    <property type="entry name" value="IF-6"/>
    <property type="match status" value="1"/>
</dbReference>
<dbReference type="SMART" id="SM00654">
    <property type="entry name" value="eIF6"/>
    <property type="match status" value="1"/>
</dbReference>
<dbReference type="SUPFAM" id="SSF55909">
    <property type="entry name" value="Pentein"/>
    <property type="match status" value="1"/>
</dbReference>
<gene>
    <name evidence="1" type="primary">TIF6</name>
    <name type="ordered locus">CAALFM_CR07080WA</name>
    <name type="ORF">CaO19.1815</name>
    <name type="ORF">CaO19.9378</name>
</gene>
<accession>Q59L13</accession>
<accession>A0A1D8PTE2</accession>
<name>IF6_CANAL</name>
<feature type="chain" id="PRO_0000402107" description="Eukaryotic translation initiation factor 6">
    <location>
        <begin position="1"/>
        <end position="245"/>
    </location>
</feature>
<feature type="modified residue" description="Phosphoserine; by CK1" evidence="1">
    <location>
        <position position="174"/>
    </location>
</feature>
<feature type="modified residue" description="Phosphoserine; by CK1" evidence="1">
    <location>
        <position position="175"/>
    </location>
</feature>
<organism>
    <name type="scientific">Candida albicans (strain SC5314 / ATCC MYA-2876)</name>
    <name type="common">Yeast</name>
    <dbReference type="NCBI Taxonomy" id="237561"/>
    <lineage>
        <taxon>Eukaryota</taxon>
        <taxon>Fungi</taxon>
        <taxon>Dikarya</taxon>
        <taxon>Ascomycota</taxon>
        <taxon>Saccharomycotina</taxon>
        <taxon>Pichiomycetes</taxon>
        <taxon>Debaryomycetaceae</taxon>
        <taxon>Candida/Lodderomyces clade</taxon>
        <taxon>Candida</taxon>
    </lineage>
</organism>
<protein>
    <recommendedName>
        <fullName evidence="1">Eukaryotic translation initiation factor 6</fullName>
        <shortName evidence="1">eIF-6</shortName>
    </recommendedName>
</protein>
<evidence type="ECO:0000255" key="1">
    <source>
        <dbReference type="HAMAP-Rule" id="MF_03132"/>
    </source>
</evidence>
<keyword id="KW-0963">Cytoplasm</keyword>
<keyword id="KW-0396">Initiation factor</keyword>
<keyword id="KW-0539">Nucleus</keyword>
<keyword id="KW-0597">Phosphoprotein</keyword>
<keyword id="KW-0648">Protein biosynthesis</keyword>
<keyword id="KW-1185">Reference proteome</keyword>
<keyword id="KW-0690">Ribosome biogenesis</keyword>
<reference key="1">
    <citation type="journal article" date="2004" name="Proc. Natl. Acad. Sci. U.S.A.">
        <title>The diploid genome sequence of Candida albicans.</title>
        <authorList>
            <person name="Jones T."/>
            <person name="Federspiel N.A."/>
            <person name="Chibana H."/>
            <person name="Dungan J."/>
            <person name="Kalman S."/>
            <person name="Magee B.B."/>
            <person name="Newport G."/>
            <person name="Thorstenson Y.R."/>
            <person name="Agabian N."/>
            <person name="Magee P.T."/>
            <person name="Davis R.W."/>
            <person name="Scherer S."/>
        </authorList>
    </citation>
    <scope>NUCLEOTIDE SEQUENCE [LARGE SCALE GENOMIC DNA]</scope>
    <source>
        <strain>SC5314 / ATCC MYA-2876</strain>
    </source>
</reference>
<reference key="2">
    <citation type="journal article" date="2007" name="Genome Biol.">
        <title>Assembly of the Candida albicans genome into sixteen supercontigs aligned on the eight chromosomes.</title>
        <authorList>
            <person name="van het Hoog M."/>
            <person name="Rast T.J."/>
            <person name="Martchenko M."/>
            <person name="Grindle S."/>
            <person name="Dignard D."/>
            <person name="Hogues H."/>
            <person name="Cuomo C."/>
            <person name="Berriman M."/>
            <person name="Scherer S."/>
            <person name="Magee B.B."/>
            <person name="Whiteway M."/>
            <person name="Chibana H."/>
            <person name="Nantel A."/>
            <person name="Magee P.T."/>
        </authorList>
    </citation>
    <scope>GENOME REANNOTATION</scope>
    <source>
        <strain>SC5314 / ATCC MYA-2876</strain>
    </source>
</reference>
<reference key="3">
    <citation type="journal article" date="2013" name="Genome Biol.">
        <title>Assembly of a phased diploid Candida albicans genome facilitates allele-specific measurements and provides a simple model for repeat and indel structure.</title>
        <authorList>
            <person name="Muzzey D."/>
            <person name="Schwartz K."/>
            <person name="Weissman J.S."/>
            <person name="Sherlock G."/>
        </authorList>
    </citation>
    <scope>NUCLEOTIDE SEQUENCE [LARGE SCALE GENOMIC DNA]</scope>
    <scope>GENOME REANNOTATION</scope>
    <source>
        <strain>SC5314 / ATCC MYA-2876</strain>
    </source>
</reference>